<feature type="chain" id="PRO_0000138821" description="3-dehydroquinate dehydratase">
    <location>
        <begin position="1"/>
        <end position="228"/>
    </location>
</feature>
<feature type="active site" description="Proton donor/acceptor" evidence="1">
    <location>
        <position position="118"/>
    </location>
</feature>
<feature type="active site" description="Schiff-base intermediate with substrate" evidence="1">
    <location>
        <position position="143"/>
    </location>
</feature>
<feature type="binding site" evidence="1">
    <location>
        <begin position="30"/>
        <end position="32"/>
    </location>
    <ligand>
        <name>3-dehydroquinate</name>
        <dbReference type="ChEBI" id="CHEBI:32364"/>
    </ligand>
</feature>
<feature type="binding site" evidence="1">
    <location>
        <position position="62"/>
    </location>
    <ligand>
        <name>3-dehydroquinate</name>
        <dbReference type="ChEBI" id="CHEBI:32364"/>
    </ligand>
</feature>
<feature type="binding site" evidence="1">
    <location>
        <position position="186"/>
    </location>
    <ligand>
        <name>3-dehydroquinate</name>
        <dbReference type="ChEBI" id="CHEBI:32364"/>
    </ligand>
</feature>
<feature type="binding site" evidence="1">
    <location>
        <position position="205"/>
    </location>
    <ligand>
        <name>3-dehydroquinate</name>
        <dbReference type="ChEBI" id="CHEBI:32364"/>
    </ligand>
</feature>
<feature type="binding site" evidence="1">
    <location>
        <position position="209"/>
    </location>
    <ligand>
        <name>3-dehydroquinate</name>
        <dbReference type="ChEBI" id="CHEBI:32364"/>
    </ligand>
</feature>
<accession>P63592</accession>
<accession>Q9A0E5</accession>
<keyword id="KW-0028">Amino-acid biosynthesis</keyword>
<keyword id="KW-0057">Aromatic amino acid biosynthesis</keyword>
<keyword id="KW-0456">Lyase</keyword>
<keyword id="KW-0704">Schiff base</keyword>
<gene>
    <name evidence="1" type="primary">aroD</name>
    <name type="ordered locus">spyM18_0871</name>
</gene>
<name>AROD_STRP8</name>
<evidence type="ECO:0000255" key="1">
    <source>
        <dbReference type="HAMAP-Rule" id="MF_00214"/>
    </source>
</evidence>
<proteinExistence type="inferred from homology"/>
<organism>
    <name type="scientific">Streptococcus pyogenes serotype M18 (strain MGAS8232)</name>
    <dbReference type="NCBI Taxonomy" id="186103"/>
    <lineage>
        <taxon>Bacteria</taxon>
        <taxon>Bacillati</taxon>
        <taxon>Bacillota</taxon>
        <taxon>Bacilli</taxon>
        <taxon>Lactobacillales</taxon>
        <taxon>Streptococcaceae</taxon>
        <taxon>Streptococcus</taxon>
    </lineage>
</organism>
<dbReference type="EC" id="4.2.1.10" evidence="1"/>
<dbReference type="EMBL" id="AE009949">
    <property type="protein sequence ID" value="AAL97525.1"/>
    <property type="molecule type" value="Genomic_DNA"/>
</dbReference>
<dbReference type="RefSeq" id="WP_002985140.1">
    <property type="nucleotide sequence ID" value="NC_003485.1"/>
</dbReference>
<dbReference type="SMR" id="P63592"/>
<dbReference type="GeneID" id="69901072"/>
<dbReference type="KEGG" id="spm:spyM18_0871"/>
<dbReference type="HOGENOM" id="CLU_064444_0_0_9"/>
<dbReference type="UniPathway" id="UPA00053">
    <property type="reaction ID" value="UER00086"/>
</dbReference>
<dbReference type="GO" id="GO:0003855">
    <property type="term" value="F:3-dehydroquinate dehydratase activity"/>
    <property type="evidence" value="ECO:0007669"/>
    <property type="project" value="UniProtKB-UniRule"/>
</dbReference>
<dbReference type="GO" id="GO:0046279">
    <property type="term" value="P:3,4-dihydroxybenzoate biosynthetic process"/>
    <property type="evidence" value="ECO:0007669"/>
    <property type="project" value="TreeGrafter"/>
</dbReference>
<dbReference type="GO" id="GO:0008652">
    <property type="term" value="P:amino acid biosynthetic process"/>
    <property type="evidence" value="ECO:0007669"/>
    <property type="project" value="UniProtKB-KW"/>
</dbReference>
<dbReference type="GO" id="GO:0009073">
    <property type="term" value="P:aromatic amino acid family biosynthetic process"/>
    <property type="evidence" value="ECO:0007669"/>
    <property type="project" value="UniProtKB-KW"/>
</dbReference>
<dbReference type="GO" id="GO:0009423">
    <property type="term" value="P:chorismate biosynthetic process"/>
    <property type="evidence" value="ECO:0007669"/>
    <property type="project" value="UniProtKB-UniRule"/>
</dbReference>
<dbReference type="CDD" id="cd00502">
    <property type="entry name" value="DHQase_I"/>
    <property type="match status" value="1"/>
</dbReference>
<dbReference type="Gene3D" id="3.20.20.70">
    <property type="entry name" value="Aldolase class I"/>
    <property type="match status" value="1"/>
</dbReference>
<dbReference type="HAMAP" id="MF_00214">
    <property type="entry name" value="AroD"/>
    <property type="match status" value="1"/>
</dbReference>
<dbReference type="InterPro" id="IPR013785">
    <property type="entry name" value="Aldolase_TIM"/>
</dbReference>
<dbReference type="InterPro" id="IPR001381">
    <property type="entry name" value="DHquinase_I"/>
</dbReference>
<dbReference type="InterPro" id="IPR050146">
    <property type="entry name" value="Type-I_3-dehydroquinase"/>
</dbReference>
<dbReference type="NCBIfam" id="TIGR01093">
    <property type="entry name" value="aroD"/>
    <property type="match status" value="1"/>
</dbReference>
<dbReference type="PANTHER" id="PTHR43699">
    <property type="entry name" value="3-DEHYDROQUINATE DEHYDRATASE"/>
    <property type="match status" value="1"/>
</dbReference>
<dbReference type="PANTHER" id="PTHR43699:SF1">
    <property type="entry name" value="3-DEHYDROQUINATE DEHYDRATASE"/>
    <property type="match status" value="1"/>
</dbReference>
<dbReference type="Pfam" id="PF01487">
    <property type="entry name" value="DHquinase_I"/>
    <property type="match status" value="1"/>
</dbReference>
<dbReference type="SUPFAM" id="SSF51569">
    <property type="entry name" value="Aldolase"/>
    <property type="match status" value="1"/>
</dbReference>
<sequence>MRIVAPVMPRHFDEAQAIDISKYEDVNLIEWRADFLPKDEIVAVAPAIFEKFAGKEIIFTLRTVQEGGNITLSSQEYVDIIKEINAIYNPDYIDFEYFTHKSVFQEMLDFPNLILSYHNFEETPENLMEAFSEMTKLAPRVVKIAVMPQSEQDVLDLMNYTRGFKTLNPEQEFATISMGKLGRLSRFAGDVIGSSWTYVSLDHVSGPGQVTLNDMKRIIEVLEMDISN</sequence>
<protein>
    <recommendedName>
        <fullName evidence="1">3-dehydroquinate dehydratase</fullName>
        <shortName evidence="1">3-dehydroquinase</shortName>
        <ecNumber evidence="1">4.2.1.10</ecNumber>
    </recommendedName>
    <alternativeName>
        <fullName evidence="1">Type I DHQase</fullName>
    </alternativeName>
    <alternativeName>
        <fullName evidence="1">Type I dehydroquinase</fullName>
        <shortName evidence="1">DHQ1</shortName>
    </alternativeName>
</protein>
<comment type="function">
    <text evidence="1">Involved in the third step of the chorismate pathway, which leads to the biosynthesis of aromatic amino acids. Catalyzes the cis-dehydration of 3-dehydroquinate (DHQ) and introduces the first double bond of the aromatic ring to yield 3-dehydroshikimate.</text>
</comment>
<comment type="catalytic activity">
    <reaction evidence="1">
        <text>3-dehydroquinate = 3-dehydroshikimate + H2O</text>
        <dbReference type="Rhea" id="RHEA:21096"/>
        <dbReference type="ChEBI" id="CHEBI:15377"/>
        <dbReference type="ChEBI" id="CHEBI:16630"/>
        <dbReference type="ChEBI" id="CHEBI:32364"/>
        <dbReference type="EC" id="4.2.1.10"/>
    </reaction>
</comment>
<comment type="pathway">
    <text evidence="1">Metabolic intermediate biosynthesis; chorismate biosynthesis; chorismate from D-erythrose 4-phosphate and phosphoenolpyruvate: step 3/7.</text>
</comment>
<comment type="subunit">
    <text evidence="1">Homodimer.</text>
</comment>
<comment type="similarity">
    <text evidence="1">Belongs to the type-I 3-dehydroquinase family.</text>
</comment>
<reference key="1">
    <citation type="journal article" date="2002" name="Proc. Natl. Acad. Sci. U.S.A.">
        <title>Genome sequence and comparative microarray analysis of serotype M18 group A Streptococcus strains associated with acute rheumatic fever outbreaks.</title>
        <authorList>
            <person name="Smoot J.C."/>
            <person name="Barbian K.D."/>
            <person name="Van Gompel J.J."/>
            <person name="Smoot L.M."/>
            <person name="Chaussee M.S."/>
            <person name="Sylva G.L."/>
            <person name="Sturdevant D.E."/>
            <person name="Ricklefs S.M."/>
            <person name="Porcella S.F."/>
            <person name="Parkins L.D."/>
            <person name="Beres S.B."/>
            <person name="Campbell D.S."/>
            <person name="Smith T.M."/>
            <person name="Zhang Q."/>
            <person name="Kapur V."/>
            <person name="Daly J.A."/>
            <person name="Veasy L.G."/>
            <person name="Musser J.M."/>
        </authorList>
    </citation>
    <scope>NUCLEOTIDE SEQUENCE [LARGE SCALE GENOMIC DNA]</scope>
    <source>
        <strain>MGAS8232</strain>
    </source>
</reference>